<name>SEPF_CALS8</name>
<sequence length="145" mass="16781">MFDNLQRKFLNLIGIEIEEEDKPQESTKAKEENVKPKHETPKVVTIGKANQTEVTVYNLKLFDEVVKVCDALRENKIVVFNLEQVAEDHIQRIIDFVSGAVYVLDAKIHKVSKKIFVVVPRSIDLEVDEQLKEEFRTKGVFAWLK</sequence>
<comment type="function">
    <text evidence="1">Cell division protein that is part of the divisome complex and is recruited early to the Z-ring. Probably stimulates Z-ring formation, perhaps through the cross-linking of FtsZ protofilaments. Its function overlaps with FtsA.</text>
</comment>
<comment type="subunit">
    <text evidence="1">Homodimer. Interacts with FtsZ.</text>
</comment>
<comment type="subcellular location">
    <subcellularLocation>
        <location evidence="1">Cytoplasm</location>
    </subcellularLocation>
    <text evidence="1">Localizes to the division site, in a FtsZ-dependent manner.</text>
</comment>
<comment type="similarity">
    <text evidence="1">Belongs to the SepF family.</text>
</comment>
<dbReference type="EMBL" id="CP000679">
    <property type="protein sequence ID" value="ABP67493.1"/>
    <property type="molecule type" value="Genomic_DNA"/>
</dbReference>
<dbReference type="RefSeq" id="WP_011917429.1">
    <property type="nucleotide sequence ID" value="NC_009437.1"/>
</dbReference>
<dbReference type="SMR" id="A4XKQ8"/>
<dbReference type="STRING" id="351627.Csac_1908"/>
<dbReference type="KEGG" id="csc:Csac_1908"/>
<dbReference type="eggNOG" id="COG1799">
    <property type="taxonomic scope" value="Bacteria"/>
</dbReference>
<dbReference type="HOGENOM" id="CLU_078499_4_1_9"/>
<dbReference type="OrthoDB" id="9815206at2"/>
<dbReference type="Proteomes" id="UP000000256">
    <property type="component" value="Chromosome"/>
</dbReference>
<dbReference type="GO" id="GO:0005737">
    <property type="term" value="C:cytoplasm"/>
    <property type="evidence" value="ECO:0007669"/>
    <property type="project" value="UniProtKB-SubCell"/>
</dbReference>
<dbReference type="GO" id="GO:0000917">
    <property type="term" value="P:division septum assembly"/>
    <property type="evidence" value="ECO:0007669"/>
    <property type="project" value="UniProtKB-KW"/>
</dbReference>
<dbReference type="GO" id="GO:0043093">
    <property type="term" value="P:FtsZ-dependent cytokinesis"/>
    <property type="evidence" value="ECO:0007669"/>
    <property type="project" value="UniProtKB-UniRule"/>
</dbReference>
<dbReference type="Gene3D" id="3.30.110.150">
    <property type="entry name" value="SepF-like protein"/>
    <property type="match status" value="1"/>
</dbReference>
<dbReference type="HAMAP" id="MF_01197">
    <property type="entry name" value="SepF"/>
    <property type="match status" value="1"/>
</dbReference>
<dbReference type="InterPro" id="IPR023052">
    <property type="entry name" value="Cell_div_SepF"/>
</dbReference>
<dbReference type="InterPro" id="IPR007561">
    <property type="entry name" value="Cell_div_SepF/SepF-rel"/>
</dbReference>
<dbReference type="InterPro" id="IPR038594">
    <property type="entry name" value="SepF-like_sf"/>
</dbReference>
<dbReference type="PANTHER" id="PTHR35798">
    <property type="entry name" value="CELL DIVISION PROTEIN SEPF"/>
    <property type="match status" value="1"/>
</dbReference>
<dbReference type="PANTHER" id="PTHR35798:SF1">
    <property type="entry name" value="CELL DIVISION PROTEIN SEPF"/>
    <property type="match status" value="1"/>
</dbReference>
<dbReference type="Pfam" id="PF04472">
    <property type="entry name" value="SepF"/>
    <property type="match status" value="1"/>
</dbReference>
<accession>A4XKQ8</accession>
<gene>
    <name evidence="1" type="primary">sepF</name>
    <name type="ordered locus">Csac_1908</name>
</gene>
<protein>
    <recommendedName>
        <fullName evidence="1">Cell division protein SepF</fullName>
    </recommendedName>
</protein>
<feature type="chain" id="PRO_0000333989" description="Cell division protein SepF">
    <location>
        <begin position="1"/>
        <end position="145"/>
    </location>
</feature>
<feature type="region of interest" description="Disordered" evidence="2">
    <location>
        <begin position="21"/>
        <end position="41"/>
    </location>
</feature>
<feature type="compositionally biased region" description="Basic and acidic residues" evidence="2">
    <location>
        <begin position="23"/>
        <end position="41"/>
    </location>
</feature>
<keyword id="KW-0131">Cell cycle</keyword>
<keyword id="KW-0132">Cell division</keyword>
<keyword id="KW-0963">Cytoplasm</keyword>
<keyword id="KW-0717">Septation</keyword>
<organism>
    <name type="scientific">Caldicellulosiruptor saccharolyticus (strain ATCC 43494 / DSM 8903 / Tp8T 6331)</name>
    <dbReference type="NCBI Taxonomy" id="351627"/>
    <lineage>
        <taxon>Bacteria</taxon>
        <taxon>Bacillati</taxon>
        <taxon>Bacillota</taxon>
        <taxon>Bacillota incertae sedis</taxon>
        <taxon>Caldicellulosiruptorales</taxon>
        <taxon>Caldicellulosiruptoraceae</taxon>
        <taxon>Caldicellulosiruptor</taxon>
    </lineage>
</organism>
<evidence type="ECO:0000255" key="1">
    <source>
        <dbReference type="HAMAP-Rule" id="MF_01197"/>
    </source>
</evidence>
<evidence type="ECO:0000256" key="2">
    <source>
        <dbReference type="SAM" id="MobiDB-lite"/>
    </source>
</evidence>
<proteinExistence type="inferred from homology"/>
<reference key="1">
    <citation type="submission" date="2007-04" db="EMBL/GenBank/DDBJ databases">
        <title>Genome sequence of the thermophilic hydrogen-producing bacterium Caldicellulosiruptor saccharolyticus DSM 8903.</title>
        <authorList>
            <person name="Copeland A."/>
            <person name="Lucas S."/>
            <person name="Lapidus A."/>
            <person name="Barry K."/>
            <person name="Detter J.C."/>
            <person name="Glavina del Rio T."/>
            <person name="Hammon N."/>
            <person name="Israni S."/>
            <person name="Dalin E."/>
            <person name="Tice H."/>
            <person name="Pitluck S."/>
            <person name="Kiss H."/>
            <person name="Brettin T."/>
            <person name="Bruce D."/>
            <person name="Han C."/>
            <person name="Schmutz J."/>
            <person name="Larimer F."/>
            <person name="Land M."/>
            <person name="Hauser L."/>
            <person name="Kyrpides N."/>
            <person name="Lykidis A."/>
            <person name="van de Werken H.J.G."/>
            <person name="Verhaart M.R.A."/>
            <person name="VanFossen A.L."/>
            <person name="Lewis D.L."/>
            <person name="Nichols J.D."/>
            <person name="Goorissen H.P."/>
            <person name="van Niel E.W.J."/>
            <person name="Stams F.J.M."/>
            <person name="Willquist K.U."/>
            <person name="Ward D.E."/>
            <person name="van der Oost J."/>
            <person name="Kelly R.M."/>
            <person name="Kengen S.M.W."/>
            <person name="Richardson P."/>
        </authorList>
    </citation>
    <scope>NUCLEOTIDE SEQUENCE [LARGE SCALE GENOMIC DNA]</scope>
    <source>
        <strain>ATCC 43494 / DSM 8903 / Tp8T 6331</strain>
    </source>
</reference>